<proteinExistence type="inferred from homology"/>
<accession>B5E8U3</accession>
<evidence type="ECO:0000255" key="1">
    <source>
        <dbReference type="HAMAP-Rule" id="MF_01217"/>
    </source>
</evidence>
<evidence type="ECO:0000255" key="2">
    <source>
        <dbReference type="PROSITE-ProRule" id="PRU00258"/>
    </source>
</evidence>
<organism>
    <name type="scientific">Citrifermentans bemidjiense (strain ATCC BAA-1014 / DSM 16622 / JCM 12645 / Bem)</name>
    <name type="common">Geobacter bemidjiensis</name>
    <dbReference type="NCBI Taxonomy" id="404380"/>
    <lineage>
        <taxon>Bacteria</taxon>
        <taxon>Pseudomonadati</taxon>
        <taxon>Thermodesulfobacteriota</taxon>
        <taxon>Desulfuromonadia</taxon>
        <taxon>Geobacterales</taxon>
        <taxon>Geobacteraceae</taxon>
        <taxon>Citrifermentans</taxon>
    </lineage>
</organism>
<protein>
    <recommendedName>
        <fullName evidence="1">Acyl carrier protein</fullName>
        <shortName evidence="1">ACP</shortName>
    </recommendedName>
</protein>
<gene>
    <name evidence="1" type="primary">acpP</name>
    <name type="ordered locus">Gbem_3105</name>
</gene>
<name>ACP_CITBB</name>
<reference key="1">
    <citation type="submission" date="2008-07" db="EMBL/GenBank/DDBJ databases">
        <title>Complete sequence of Geobacter bemidjiensis BEM.</title>
        <authorList>
            <consortium name="US DOE Joint Genome Institute"/>
            <person name="Lucas S."/>
            <person name="Copeland A."/>
            <person name="Lapidus A."/>
            <person name="Glavina del Rio T."/>
            <person name="Dalin E."/>
            <person name="Tice H."/>
            <person name="Bruce D."/>
            <person name="Goodwin L."/>
            <person name="Pitluck S."/>
            <person name="Kiss H."/>
            <person name="Brettin T."/>
            <person name="Detter J.C."/>
            <person name="Han C."/>
            <person name="Kuske C.R."/>
            <person name="Schmutz J."/>
            <person name="Larimer F."/>
            <person name="Land M."/>
            <person name="Hauser L."/>
            <person name="Kyrpides N."/>
            <person name="Lykidis A."/>
            <person name="Lovley D."/>
            <person name="Richardson P."/>
        </authorList>
    </citation>
    <scope>NUCLEOTIDE SEQUENCE [LARGE SCALE GENOMIC DNA]</scope>
    <source>
        <strain>ATCC BAA-1014 / DSM 16622 / JCM 12645 / Bem</strain>
    </source>
</reference>
<feature type="chain" id="PRO_1000139029" description="Acyl carrier protein">
    <location>
        <begin position="1"/>
        <end position="77"/>
    </location>
</feature>
<feature type="domain" description="Carrier" evidence="2">
    <location>
        <begin position="2"/>
        <end position="77"/>
    </location>
</feature>
<feature type="modified residue" description="O-(pantetheine 4'-phosphoryl)serine" evidence="2">
    <location>
        <position position="37"/>
    </location>
</feature>
<sequence length="77" mass="8607">MASIEKRIKEIVAEQLGVDEAQVTNESSFMDDLGADSLDTVELVMALEEEFEIEISDEDAEKIQSVQDAIDYITDHT</sequence>
<keyword id="KW-0963">Cytoplasm</keyword>
<keyword id="KW-0275">Fatty acid biosynthesis</keyword>
<keyword id="KW-0276">Fatty acid metabolism</keyword>
<keyword id="KW-0444">Lipid biosynthesis</keyword>
<keyword id="KW-0443">Lipid metabolism</keyword>
<keyword id="KW-0596">Phosphopantetheine</keyword>
<keyword id="KW-0597">Phosphoprotein</keyword>
<keyword id="KW-1185">Reference proteome</keyword>
<comment type="function">
    <text evidence="1">Carrier of the growing fatty acid chain in fatty acid biosynthesis.</text>
</comment>
<comment type="pathway">
    <text evidence="1">Lipid metabolism; fatty acid biosynthesis.</text>
</comment>
<comment type="subcellular location">
    <subcellularLocation>
        <location evidence="1">Cytoplasm</location>
    </subcellularLocation>
</comment>
<comment type="PTM">
    <text evidence="1">4'-phosphopantetheine is transferred from CoA to a specific serine of apo-ACP by AcpS. This modification is essential for activity because fatty acids are bound in thioester linkage to the sulfhydryl of the prosthetic group.</text>
</comment>
<comment type="similarity">
    <text evidence="1">Belongs to the acyl carrier protein (ACP) family.</text>
</comment>
<dbReference type="EMBL" id="CP001124">
    <property type="protein sequence ID" value="ACH40107.1"/>
    <property type="molecule type" value="Genomic_DNA"/>
</dbReference>
<dbReference type="RefSeq" id="WP_012531540.1">
    <property type="nucleotide sequence ID" value="NC_011146.1"/>
</dbReference>
<dbReference type="SMR" id="B5E8U3"/>
<dbReference type="STRING" id="404380.Gbem_3105"/>
<dbReference type="KEGG" id="gbm:Gbem_3105"/>
<dbReference type="eggNOG" id="COG0236">
    <property type="taxonomic scope" value="Bacteria"/>
</dbReference>
<dbReference type="HOGENOM" id="CLU_108696_5_1_7"/>
<dbReference type="OrthoDB" id="9804551at2"/>
<dbReference type="UniPathway" id="UPA00094"/>
<dbReference type="Proteomes" id="UP000008825">
    <property type="component" value="Chromosome"/>
</dbReference>
<dbReference type="GO" id="GO:0005829">
    <property type="term" value="C:cytosol"/>
    <property type="evidence" value="ECO:0007669"/>
    <property type="project" value="TreeGrafter"/>
</dbReference>
<dbReference type="GO" id="GO:0016020">
    <property type="term" value="C:membrane"/>
    <property type="evidence" value="ECO:0007669"/>
    <property type="project" value="GOC"/>
</dbReference>
<dbReference type="GO" id="GO:0000035">
    <property type="term" value="F:acyl binding"/>
    <property type="evidence" value="ECO:0007669"/>
    <property type="project" value="TreeGrafter"/>
</dbReference>
<dbReference type="GO" id="GO:0000036">
    <property type="term" value="F:acyl carrier activity"/>
    <property type="evidence" value="ECO:0007669"/>
    <property type="project" value="UniProtKB-UniRule"/>
</dbReference>
<dbReference type="GO" id="GO:0009245">
    <property type="term" value="P:lipid A biosynthetic process"/>
    <property type="evidence" value="ECO:0007669"/>
    <property type="project" value="TreeGrafter"/>
</dbReference>
<dbReference type="FunFam" id="1.10.1200.10:FF:000001">
    <property type="entry name" value="Acyl carrier protein"/>
    <property type="match status" value="1"/>
</dbReference>
<dbReference type="Gene3D" id="1.10.1200.10">
    <property type="entry name" value="ACP-like"/>
    <property type="match status" value="1"/>
</dbReference>
<dbReference type="HAMAP" id="MF_01217">
    <property type="entry name" value="Acyl_carrier"/>
    <property type="match status" value="1"/>
</dbReference>
<dbReference type="InterPro" id="IPR003231">
    <property type="entry name" value="ACP"/>
</dbReference>
<dbReference type="InterPro" id="IPR036736">
    <property type="entry name" value="ACP-like_sf"/>
</dbReference>
<dbReference type="InterPro" id="IPR009081">
    <property type="entry name" value="PP-bd_ACP"/>
</dbReference>
<dbReference type="InterPro" id="IPR006162">
    <property type="entry name" value="Ppantetheine_attach_site"/>
</dbReference>
<dbReference type="NCBIfam" id="TIGR00517">
    <property type="entry name" value="acyl_carrier"/>
    <property type="match status" value="1"/>
</dbReference>
<dbReference type="NCBIfam" id="NF002148">
    <property type="entry name" value="PRK00982.1-2"/>
    <property type="match status" value="1"/>
</dbReference>
<dbReference type="NCBIfam" id="NF002149">
    <property type="entry name" value="PRK00982.1-3"/>
    <property type="match status" value="1"/>
</dbReference>
<dbReference type="NCBIfam" id="NF002150">
    <property type="entry name" value="PRK00982.1-4"/>
    <property type="match status" value="1"/>
</dbReference>
<dbReference type="NCBIfam" id="NF002151">
    <property type="entry name" value="PRK00982.1-5"/>
    <property type="match status" value="1"/>
</dbReference>
<dbReference type="PANTHER" id="PTHR20863">
    <property type="entry name" value="ACYL CARRIER PROTEIN"/>
    <property type="match status" value="1"/>
</dbReference>
<dbReference type="PANTHER" id="PTHR20863:SF76">
    <property type="entry name" value="CARRIER DOMAIN-CONTAINING PROTEIN"/>
    <property type="match status" value="1"/>
</dbReference>
<dbReference type="Pfam" id="PF00550">
    <property type="entry name" value="PP-binding"/>
    <property type="match status" value="1"/>
</dbReference>
<dbReference type="SUPFAM" id="SSF47336">
    <property type="entry name" value="ACP-like"/>
    <property type="match status" value="1"/>
</dbReference>
<dbReference type="PROSITE" id="PS50075">
    <property type="entry name" value="CARRIER"/>
    <property type="match status" value="1"/>
</dbReference>
<dbReference type="PROSITE" id="PS00012">
    <property type="entry name" value="PHOSPHOPANTETHEINE"/>
    <property type="match status" value="1"/>
</dbReference>